<dbReference type="EC" id="3.6.5.2" evidence="4"/>
<dbReference type="EMBL" id="BC027769">
    <property type="protein sequence ID" value="AAH27769.1"/>
    <property type="molecule type" value="mRNA"/>
</dbReference>
<dbReference type="CCDS" id="CCDS25997.1"/>
<dbReference type="SMR" id="Q8K386"/>
<dbReference type="DIP" id="DIP-37728N"/>
<dbReference type="FunCoup" id="Q8K386">
    <property type="interactions" value="265"/>
</dbReference>
<dbReference type="IntAct" id="Q8K386">
    <property type="interactions" value="2"/>
</dbReference>
<dbReference type="STRING" id="10090.ENSMUSP00000021459"/>
<dbReference type="SwissPalm" id="Q8K386"/>
<dbReference type="jPOST" id="Q8K386"/>
<dbReference type="PaxDb" id="10090-ENSMUSP00000021459"/>
<dbReference type="ProteomicsDB" id="255063"/>
<dbReference type="AGR" id="MGI:1916865"/>
<dbReference type="MGI" id="MGI:1916865">
    <property type="gene designation" value="Rab15"/>
</dbReference>
<dbReference type="eggNOG" id="KOG0078">
    <property type="taxonomic scope" value="Eukaryota"/>
</dbReference>
<dbReference type="InParanoid" id="Q8K386"/>
<dbReference type="PhylomeDB" id="Q8K386"/>
<dbReference type="Reactome" id="R-MMU-8873719">
    <property type="pathway name" value="RAB geranylgeranylation"/>
</dbReference>
<dbReference type="CD-CODE" id="CE726F99">
    <property type="entry name" value="Postsynaptic density"/>
</dbReference>
<dbReference type="ChiTaRS" id="Rab15">
    <property type="organism name" value="mouse"/>
</dbReference>
<dbReference type="PRO" id="PR:Q8K386"/>
<dbReference type="Proteomes" id="UP000000589">
    <property type="component" value="Unplaced"/>
</dbReference>
<dbReference type="RNAct" id="Q8K386">
    <property type="molecule type" value="protein"/>
</dbReference>
<dbReference type="GO" id="GO:0012505">
    <property type="term" value="C:endomembrane system"/>
    <property type="evidence" value="ECO:0007669"/>
    <property type="project" value="UniProtKB-ARBA"/>
</dbReference>
<dbReference type="GO" id="GO:0005886">
    <property type="term" value="C:plasma membrane"/>
    <property type="evidence" value="ECO:0007669"/>
    <property type="project" value="UniProtKB-SubCell"/>
</dbReference>
<dbReference type="GO" id="GO:0005525">
    <property type="term" value="F:GTP binding"/>
    <property type="evidence" value="ECO:0007669"/>
    <property type="project" value="UniProtKB-KW"/>
</dbReference>
<dbReference type="GO" id="GO:0003924">
    <property type="term" value="F:GTPase activity"/>
    <property type="evidence" value="ECO:0007669"/>
    <property type="project" value="InterPro"/>
</dbReference>
<dbReference type="GO" id="GO:0015031">
    <property type="term" value="P:protein transport"/>
    <property type="evidence" value="ECO:0007669"/>
    <property type="project" value="UniProtKB-KW"/>
</dbReference>
<dbReference type="GO" id="GO:0032482">
    <property type="term" value="P:Rab protein signal transduction"/>
    <property type="evidence" value="ECO:0007669"/>
    <property type="project" value="InterPro"/>
</dbReference>
<dbReference type="CDD" id="cd04117">
    <property type="entry name" value="Rab15"/>
    <property type="match status" value="1"/>
</dbReference>
<dbReference type="FunFam" id="3.40.50.300:FF:000990">
    <property type="entry name" value="ras-related protein Rab-15 isoform X1"/>
    <property type="match status" value="1"/>
</dbReference>
<dbReference type="Gene3D" id="3.40.50.300">
    <property type="entry name" value="P-loop containing nucleotide triphosphate hydrolases"/>
    <property type="match status" value="1"/>
</dbReference>
<dbReference type="InterPro" id="IPR027417">
    <property type="entry name" value="P-loop_NTPase"/>
</dbReference>
<dbReference type="InterPro" id="IPR041826">
    <property type="entry name" value="Rab15"/>
</dbReference>
<dbReference type="InterPro" id="IPR005225">
    <property type="entry name" value="Small_GTP-bd"/>
</dbReference>
<dbReference type="InterPro" id="IPR001806">
    <property type="entry name" value="Small_GTPase"/>
</dbReference>
<dbReference type="InterPro" id="IPR050305">
    <property type="entry name" value="Small_GTPase_Rab"/>
</dbReference>
<dbReference type="NCBIfam" id="TIGR00231">
    <property type="entry name" value="small_GTP"/>
    <property type="match status" value="1"/>
</dbReference>
<dbReference type="PANTHER" id="PTHR47980">
    <property type="entry name" value="LD44762P"/>
    <property type="match status" value="1"/>
</dbReference>
<dbReference type="Pfam" id="PF00071">
    <property type="entry name" value="Ras"/>
    <property type="match status" value="1"/>
</dbReference>
<dbReference type="PRINTS" id="PR00449">
    <property type="entry name" value="RASTRNSFRMNG"/>
</dbReference>
<dbReference type="SMART" id="SM00175">
    <property type="entry name" value="RAB"/>
    <property type="match status" value="1"/>
</dbReference>
<dbReference type="SMART" id="SM00176">
    <property type="entry name" value="RAN"/>
    <property type="match status" value="1"/>
</dbReference>
<dbReference type="SMART" id="SM00173">
    <property type="entry name" value="RAS"/>
    <property type="match status" value="1"/>
</dbReference>
<dbReference type="SMART" id="SM00174">
    <property type="entry name" value="RHO"/>
    <property type="match status" value="1"/>
</dbReference>
<dbReference type="SUPFAM" id="SSF52540">
    <property type="entry name" value="P-loop containing nucleoside triphosphate hydrolases"/>
    <property type="match status" value="1"/>
</dbReference>
<dbReference type="PROSITE" id="PS51419">
    <property type="entry name" value="RAB"/>
    <property type="match status" value="1"/>
</dbReference>
<gene>
    <name evidence="8" type="primary">Rab15</name>
</gene>
<protein>
    <recommendedName>
        <fullName>Ras-related protein Rab-15</fullName>
        <ecNumber evidence="4">3.6.5.2</ecNumber>
    </recommendedName>
</protein>
<comment type="function">
    <text evidence="2 4">The small GTPases Rab are key regulators of intracellular membrane trafficking, from the formation of transport vesicles to their fusion with membranes. Rabs cycle between an inactive GDP-bound form and an active GTP-bound form that is able to recruit to membranes different sets of downstream effectors directly responsible for vesicle formation, movement, tethering and fusion (By similarity). RAB15 may act in concert with RAB3A in regulating aspects of synaptic vesicle membrane flow within the nerve terminal (By similarity).</text>
</comment>
<comment type="catalytic activity">
    <reaction evidence="4">
        <text>GTP + H2O = GDP + phosphate + H(+)</text>
        <dbReference type="Rhea" id="RHEA:19669"/>
        <dbReference type="ChEBI" id="CHEBI:15377"/>
        <dbReference type="ChEBI" id="CHEBI:15378"/>
        <dbReference type="ChEBI" id="CHEBI:37565"/>
        <dbReference type="ChEBI" id="CHEBI:43474"/>
        <dbReference type="ChEBI" id="CHEBI:58189"/>
        <dbReference type="EC" id="3.6.5.2"/>
    </reaction>
    <physiologicalReaction direction="left-to-right" evidence="4">
        <dbReference type="Rhea" id="RHEA:19670"/>
    </physiologicalReaction>
</comment>
<comment type="cofactor">
    <cofactor evidence="4">
        <name>Mg(2+)</name>
        <dbReference type="ChEBI" id="CHEBI:18420"/>
    </cofactor>
</comment>
<comment type="activity regulation">
    <text evidence="7">Regulated by guanine nucleotide exchange factors (GEFs) which promote the exchange of bound GDP for free GTP. Regulated by GTPase activating proteins (GAPs) which increase the GTP hydrolysis activity. Inhibited by GDP dissociation inhibitors (GDIs).</text>
</comment>
<comment type="subunit">
    <text evidence="3">The GTP bound form of RAB15 interacts with REP15. Interacts (GTP-bound form) with MICAL1, MICAL3, MICALCL, EHBP1 and EHBP1L1.</text>
</comment>
<comment type="subcellular location">
    <subcellularLocation>
        <location evidence="7">Cell membrane</location>
        <topology evidence="7">Lipid-anchor</topology>
        <orientation evidence="7">Cytoplasmic side</orientation>
    </subcellularLocation>
</comment>
<comment type="domain">
    <text evidence="5">Switch 1, switch 2 and the interswitch regions are characteristic of Rab GTPases and mediate the interactions with Rab downstream effectors. The switch regions undergo conformational changes upon nucleotide binding which drives interaction with specific sets of effector proteins, with most effectors only binding to GTP-bound Rab.</text>
</comment>
<comment type="similarity">
    <text evidence="7">Belongs to the small GTPase superfamily. Rab family.</text>
</comment>
<proteinExistence type="evidence at protein level"/>
<organism>
    <name type="scientific">Mus musculus</name>
    <name type="common">Mouse</name>
    <dbReference type="NCBI Taxonomy" id="10090"/>
    <lineage>
        <taxon>Eukaryota</taxon>
        <taxon>Metazoa</taxon>
        <taxon>Chordata</taxon>
        <taxon>Craniata</taxon>
        <taxon>Vertebrata</taxon>
        <taxon>Euteleostomi</taxon>
        <taxon>Mammalia</taxon>
        <taxon>Eutheria</taxon>
        <taxon>Euarchontoglires</taxon>
        <taxon>Glires</taxon>
        <taxon>Rodentia</taxon>
        <taxon>Myomorpha</taxon>
        <taxon>Muroidea</taxon>
        <taxon>Muridae</taxon>
        <taxon>Murinae</taxon>
        <taxon>Mus</taxon>
        <taxon>Mus</taxon>
    </lineage>
</organism>
<reference key="1">
    <citation type="journal article" date="2004" name="Genome Res.">
        <title>The status, quality, and expansion of the NIH full-length cDNA project: the Mammalian Gene Collection (MGC).</title>
        <authorList>
            <consortium name="The MGC Project Team"/>
        </authorList>
    </citation>
    <scope>NUCLEOTIDE SEQUENCE [LARGE SCALE MRNA]</scope>
</reference>
<reference key="2">
    <citation type="submission" date="2007-04" db="UniProtKB">
        <authorList>
            <person name="Lubec G."/>
            <person name="Kang S.U."/>
        </authorList>
    </citation>
    <scope>PROTEIN SEQUENCE OF 11-21 AND 59-69</scope>
    <scope>IDENTIFICATION BY MASS SPECTROMETRY</scope>
    <source>
        <strain>C57BL/6J</strain>
        <tissue>Brain</tissue>
    </source>
</reference>
<reference key="3">
    <citation type="journal article" date="2010" name="Cell">
        <title>A tissue-specific atlas of mouse protein phosphorylation and expression.</title>
        <authorList>
            <person name="Huttlin E.L."/>
            <person name="Jedrychowski M.P."/>
            <person name="Elias J.E."/>
            <person name="Goswami T."/>
            <person name="Rad R."/>
            <person name="Beausoleil S.A."/>
            <person name="Villen J."/>
            <person name="Haas W."/>
            <person name="Sowa M.E."/>
            <person name="Gygi S.P."/>
        </authorList>
    </citation>
    <scope>IDENTIFICATION BY MASS SPECTROMETRY [LARGE SCALE ANALYSIS]</scope>
    <source>
        <tissue>Brain</tissue>
    </source>
</reference>
<evidence type="ECO:0000250" key="1"/>
<evidence type="ECO:0000250" key="2">
    <source>
        <dbReference type="UniProtKB" id="P35289"/>
    </source>
</evidence>
<evidence type="ECO:0000250" key="3">
    <source>
        <dbReference type="UniProtKB" id="P59190"/>
    </source>
</evidence>
<evidence type="ECO:0000250" key="4">
    <source>
        <dbReference type="UniProtKB" id="P61026"/>
    </source>
</evidence>
<evidence type="ECO:0000250" key="5">
    <source>
        <dbReference type="UniProtKB" id="P62820"/>
    </source>
</evidence>
<evidence type="ECO:0000256" key="6">
    <source>
        <dbReference type="SAM" id="MobiDB-lite"/>
    </source>
</evidence>
<evidence type="ECO:0000305" key="7"/>
<evidence type="ECO:0000312" key="8">
    <source>
        <dbReference type="MGI" id="MGI:1916865"/>
    </source>
</evidence>
<feature type="chain" id="PRO_0000121189" description="Ras-related protein Rab-15">
    <location>
        <begin position="1"/>
        <end position="212"/>
    </location>
</feature>
<feature type="region of interest" description="Disordered" evidence="6">
    <location>
        <begin position="192"/>
        <end position="212"/>
    </location>
</feature>
<feature type="short sequence motif" description="Switch 1" evidence="5">
    <location>
        <begin position="31"/>
        <end position="45"/>
    </location>
</feature>
<feature type="short sequence motif" description="Switch 2" evidence="5">
    <location>
        <begin position="63"/>
        <end position="80"/>
    </location>
</feature>
<feature type="binding site" evidence="4">
    <location>
        <position position="17"/>
    </location>
    <ligand>
        <name>GTP</name>
        <dbReference type="ChEBI" id="CHEBI:37565"/>
    </ligand>
</feature>
<feature type="binding site" evidence="4">
    <location>
        <position position="18"/>
    </location>
    <ligand>
        <name>GTP</name>
        <dbReference type="ChEBI" id="CHEBI:37565"/>
    </ligand>
</feature>
<feature type="binding site" evidence="4">
    <location>
        <position position="19"/>
    </location>
    <ligand>
        <name>GTP</name>
        <dbReference type="ChEBI" id="CHEBI:37565"/>
    </ligand>
</feature>
<feature type="binding site" evidence="4">
    <location>
        <position position="20"/>
    </location>
    <ligand>
        <name>GTP</name>
        <dbReference type="ChEBI" id="CHEBI:37565"/>
    </ligand>
</feature>
<feature type="binding site" evidence="4">
    <location>
        <position position="21"/>
    </location>
    <ligand>
        <name>GTP</name>
        <dbReference type="ChEBI" id="CHEBI:37565"/>
    </ligand>
</feature>
<feature type="binding site" evidence="4">
    <location>
        <position position="22"/>
    </location>
    <ligand>
        <name>GTP</name>
        <dbReference type="ChEBI" id="CHEBI:37565"/>
    </ligand>
</feature>
<feature type="binding site" evidence="4">
    <location>
        <position position="22"/>
    </location>
    <ligand>
        <name>Mg(2+)</name>
        <dbReference type="ChEBI" id="CHEBI:18420"/>
    </ligand>
</feature>
<feature type="binding site" evidence="4">
    <location>
        <position position="23"/>
    </location>
    <ligand>
        <name>GTP</name>
        <dbReference type="ChEBI" id="CHEBI:37565"/>
    </ligand>
</feature>
<feature type="binding site" evidence="4">
    <location>
        <position position="35"/>
    </location>
    <ligand>
        <name>GTP</name>
        <dbReference type="ChEBI" id="CHEBI:37565"/>
    </ligand>
</feature>
<feature type="binding site" evidence="4">
    <location>
        <position position="39"/>
    </location>
    <ligand>
        <name>GTP</name>
        <dbReference type="ChEBI" id="CHEBI:37565"/>
    </ligand>
</feature>
<feature type="binding site" evidence="4">
    <location>
        <position position="40"/>
    </location>
    <ligand>
        <name>GTP</name>
        <dbReference type="ChEBI" id="CHEBI:37565"/>
    </ligand>
</feature>
<feature type="binding site" evidence="4">
    <location>
        <position position="40"/>
    </location>
    <ligand>
        <name>Mg(2+)</name>
        <dbReference type="ChEBI" id="CHEBI:18420"/>
    </ligand>
</feature>
<feature type="binding site" evidence="4">
    <location>
        <position position="63"/>
    </location>
    <ligand>
        <name>Mg(2+)</name>
        <dbReference type="ChEBI" id="CHEBI:18420"/>
    </ligand>
</feature>
<feature type="binding site" evidence="4">
    <location>
        <position position="66"/>
    </location>
    <ligand>
        <name>GTP</name>
        <dbReference type="ChEBI" id="CHEBI:37565"/>
    </ligand>
</feature>
<feature type="binding site" evidence="4">
    <location>
        <position position="121"/>
    </location>
    <ligand>
        <name>GTP</name>
        <dbReference type="ChEBI" id="CHEBI:37565"/>
    </ligand>
</feature>
<feature type="binding site" evidence="4">
    <location>
        <position position="122"/>
    </location>
    <ligand>
        <name>GTP</name>
        <dbReference type="ChEBI" id="CHEBI:37565"/>
    </ligand>
</feature>
<feature type="binding site" evidence="4">
    <location>
        <position position="124"/>
    </location>
    <ligand>
        <name>GTP</name>
        <dbReference type="ChEBI" id="CHEBI:37565"/>
    </ligand>
</feature>
<feature type="binding site" evidence="4">
    <location>
        <position position="151"/>
    </location>
    <ligand>
        <name>GTP</name>
        <dbReference type="ChEBI" id="CHEBI:37565"/>
    </ligand>
</feature>
<feature type="binding site" evidence="4">
    <location>
        <position position="152"/>
    </location>
    <ligand>
        <name>GTP</name>
        <dbReference type="ChEBI" id="CHEBI:37565"/>
    </ligand>
</feature>
<feature type="modified residue" description="Cysteine methyl ester" evidence="1">
    <location>
        <position position="212"/>
    </location>
</feature>
<feature type="lipid moiety-binding region" description="S-geranylgeranyl cysteine" evidence="1">
    <location>
        <position position="210"/>
    </location>
</feature>
<feature type="lipid moiety-binding region" description="S-geranylgeranyl cysteine" evidence="1">
    <location>
        <position position="212"/>
    </location>
</feature>
<accession>Q8K386</accession>
<sequence>MAKQYDVLFRLLLIGDSGVGKTCLLCRFTDNEFHSSHISTIGVDFKMKTIDVDGIKVRIQIWDTAGQERYQTITKQYYRRAQGIFLVYDISSERSYQHIMKWVSDVDEYAPEGVQKILIGNKADEEQKRQVGREQGQQLAKEYGMDFYETSACTNLNIKESFTRLTELVLQAHRKELDGLRTRASNELALAELEEDEGKPEGPANSSKTCWC</sequence>
<keyword id="KW-1003">Cell membrane</keyword>
<keyword id="KW-0903">Direct protein sequencing</keyword>
<keyword id="KW-0342">GTP-binding</keyword>
<keyword id="KW-0378">Hydrolase</keyword>
<keyword id="KW-0449">Lipoprotein</keyword>
<keyword id="KW-0460">Magnesium</keyword>
<keyword id="KW-0472">Membrane</keyword>
<keyword id="KW-0479">Metal-binding</keyword>
<keyword id="KW-0488">Methylation</keyword>
<keyword id="KW-0547">Nucleotide-binding</keyword>
<keyword id="KW-0636">Prenylation</keyword>
<keyword id="KW-0653">Protein transport</keyword>
<keyword id="KW-1185">Reference proteome</keyword>
<keyword id="KW-0813">Transport</keyword>
<name>RAB15_MOUSE</name>